<accession>B3PNC6</accession>
<evidence type="ECO:0000255" key="1">
    <source>
        <dbReference type="HAMAP-Rule" id="MF_00129"/>
    </source>
</evidence>
<gene>
    <name evidence="1" type="primary">mnmG</name>
    <name evidence="1" type="synonym">gidA</name>
    <name type="ordered locus">MARTH_orf789</name>
</gene>
<feature type="chain" id="PRO_1000122751" description="tRNA uridine 5-carboxymethylaminomethyl modification enzyme MnmG">
    <location>
        <begin position="1"/>
        <end position="607"/>
    </location>
</feature>
<feature type="binding site" evidence="1">
    <location>
        <begin position="11"/>
        <end position="16"/>
    </location>
    <ligand>
        <name>FAD</name>
        <dbReference type="ChEBI" id="CHEBI:57692"/>
    </ligand>
</feature>
<feature type="binding site" evidence="1">
    <location>
        <position position="123"/>
    </location>
    <ligand>
        <name>FAD</name>
        <dbReference type="ChEBI" id="CHEBI:57692"/>
    </ligand>
</feature>
<feature type="binding site" evidence="1">
    <location>
        <position position="178"/>
    </location>
    <ligand>
        <name>FAD</name>
        <dbReference type="ChEBI" id="CHEBI:57692"/>
    </ligand>
</feature>
<feature type="binding site" evidence="1">
    <location>
        <begin position="270"/>
        <end position="284"/>
    </location>
    <ligand>
        <name>NAD(+)</name>
        <dbReference type="ChEBI" id="CHEBI:57540"/>
    </ligand>
</feature>
<feature type="binding site" evidence="1">
    <location>
        <position position="367"/>
    </location>
    <ligand>
        <name>FAD</name>
        <dbReference type="ChEBI" id="CHEBI:57692"/>
    </ligand>
</feature>
<keyword id="KW-0963">Cytoplasm</keyword>
<keyword id="KW-0274">FAD</keyword>
<keyword id="KW-0285">Flavoprotein</keyword>
<keyword id="KW-0520">NAD</keyword>
<keyword id="KW-1185">Reference proteome</keyword>
<keyword id="KW-0819">tRNA processing</keyword>
<dbReference type="EMBL" id="CP001047">
    <property type="protein sequence ID" value="ACF07528.1"/>
    <property type="molecule type" value="Genomic_DNA"/>
</dbReference>
<dbReference type="RefSeq" id="WP_012498485.1">
    <property type="nucleotide sequence ID" value="NC_011025.1"/>
</dbReference>
<dbReference type="SMR" id="B3PNC6"/>
<dbReference type="STRING" id="243272.MARTH_orf789"/>
<dbReference type="KEGG" id="mat:MARTH_orf789"/>
<dbReference type="eggNOG" id="COG0445">
    <property type="taxonomic scope" value="Bacteria"/>
</dbReference>
<dbReference type="HOGENOM" id="CLU_007831_2_2_14"/>
<dbReference type="Proteomes" id="UP000008812">
    <property type="component" value="Chromosome"/>
</dbReference>
<dbReference type="GO" id="GO:0005829">
    <property type="term" value="C:cytosol"/>
    <property type="evidence" value="ECO:0007669"/>
    <property type="project" value="TreeGrafter"/>
</dbReference>
<dbReference type="GO" id="GO:0050660">
    <property type="term" value="F:flavin adenine dinucleotide binding"/>
    <property type="evidence" value="ECO:0007669"/>
    <property type="project" value="UniProtKB-UniRule"/>
</dbReference>
<dbReference type="GO" id="GO:0030488">
    <property type="term" value="P:tRNA methylation"/>
    <property type="evidence" value="ECO:0007669"/>
    <property type="project" value="TreeGrafter"/>
</dbReference>
<dbReference type="GO" id="GO:0002098">
    <property type="term" value="P:tRNA wobble uridine modification"/>
    <property type="evidence" value="ECO:0007669"/>
    <property type="project" value="InterPro"/>
</dbReference>
<dbReference type="FunFam" id="1.10.150.570:FF:000001">
    <property type="entry name" value="tRNA uridine 5-carboxymethylaminomethyl modification enzyme MnmG"/>
    <property type="match status" value="1"/>
</dbReference>
<dbReference type="FunFam" id="3.50.50.60:FF:000002">
    <property type="entry name" value="tRNA uridine 5-carboxymethylaminomethyl modification enzyme MnmG"/>
    <property type="match status" value="1"/>
</dbReference>
<dbReference type="Gene3D" id="3.50.50.60">
    <property type="entry name" value="FAD/NAD(P)-binding domain"/>
    <property type="match status" value="2"/>
</dbReference>
<dbReference type="Gene3D" id="1.10.150.570">
    <property type="entry name" value="GidA associated domain, C-terminal subdomain"/>
    <property type="match status" value="1"/>
</dbReference>
<dbReference type="HAMAP" id="MF_00129">
    <property type="entry name" value="MnmG_GidA"/>
    <property type="match status" value="1"/>
</dbReference>
<dbReference type="InterPro" id="IPR036188">
    <property type="entry name" value="FAD/NAD-bd_sf"/>
</dbReference>
<dbReference type="InterPro" id="IPR049312">
    <property type="entry name" value="GIDA_C_N"/>
</dbReference>
<dbReference type="InterPro" id="IPR004416">
    <property type="entry name" value="MnmG"/>
</dbReference>
<dbReference type="InterPro" id="IPR002218">
    <property type="entry name" value="MnmG-rel"/>
</dbReference>
<dbReference type="InterPro" id="IPR020595">
    <property type="entry name" value="MnmG-rel_CS"/>
</dbReference>
<dbReference type="InterPro" id="IPR026904">
    <property type="entry name" value="MnmG_C"/>
</dbReference>
<dbReference type="InterPro" id="IPR047001">
    <property type="entry name" value="MnmG_C_subdom"/>
</dbReference>
<dbReference type="InterPro" id="IPR044920">
    <property type="entry name" value="MnmG_C_subdom_sf"/>
</dbReference>
<dbReference type="InterPro" id="IPR040131">
    <property type="entry name" value="MnmG_N"/>
</dbReference>
<dbReference type="NCBIfam" id="TIGR00136">
    <property type="entry name" value="mnmG_gidA"/>
    <property type="match status" value="1"/>
</dbReference>
<dbReference type="PANTHER" id="PTHR11806">
    <property type="entry name" value="GLUCOSE INHIBITED DIVISION PROTEIN A"/>
    <property type="match status" value="1"/>
</dbReference>
<dbReference type="PANTHER" id="PTHR11806:SF0">
    <property type="entry name" value="PROTEIN MTO1 HOMOLOG, MITOCHONDRIAL"/>
    <property type="match status" value="1"/>
</dbReference>
<dbReference type="Pfam" id="PF01134">
    <property type="entry name" value="GIDA"/>
    <property type="match status" value="1"/>
</dbReference>
<dbReference type="Pfam" id="PF21680">
    <property type="entry name" value="GIDA_C_1st"/>
    <property type="match status" value="1"/>
</dbReference>
<dbReference type="Pfam" id="PF13932">
    <property type="entry name" value="SAM_GIDA_C"/>
    <property type="match status" value="1"/>
</dbReference>
<dbReference type="SMART" id="SM01228">
    <property type="entry name" value="GIDA_assoc_3"/>
    <property type="match status" value="1"/>
</dbReference>
<dbReference type="SUPFAM" id="SSF51905">
    <property type="entry name" value="FAD/NAD(P)-binding domain"/>
    <property type="match status" value="1"/>
</dbReference>
<dbReference type="PROSITE" id="PS01280">
    <property type="entry name" value="GIDA_1"/>
    <property type="match status" value="1"/>
</dbReference>
<dbReference type="PROSITE" id="PS01281">
    <property type="entry name" value="GIDA_2"/>
    <property type="match status" value="1"/>
</dbReference>
<sequence length="607" mass="67850">MNKTYDAIVIGGGHAGIEAAYALAKRAFNVALITLNINRLAMLPCNPSIGGSAKGIITREIDALGGMQGYFADLAMIQIKMLNTSKGPAVWSLRAQIDKEKYCQIILDDIKKQSNITLIEDEVVDLIVNENQCHGVVTKENGNISAKVVVMTTGVYMNSRILRGTDIKYDGPDGEKTSSSLSKNLMKYGFEILRLKTGTPCRIYTDSIDFSKVEKEQLDKNELSFSSHSNVKLDEQTCCFLTHTTAKTKEIILNNLDKSSLYSGIIIGIGPRYCPSVEDKIVRFQEKETHHIFFEPETAKGDIMYINGLSTSMPESVQDQMIASIPGLEKARVQKYGYAIEYDAINPLNLYKSLESKTLSNFFSAGQPNGTSGYEEAAAQGLIAGINAANKLDKMPMMEIKRSSAYIGVLIDDIVTKGTNEPYRMLTSRAEYRLLLRNDNVDERLSQYAFENKMISAQSYNKVLDKYKLINNEIQKLKDEYVSSNSELAKKYNVTSGVSKLKLLANPAVDPKDILGNDFPYLDEITIQVRLFGYLKKQESAAEKMFRLEKLKLPIDLDYNLVENLATEARQKLNQIKPTTIGQASRISGINPADIQMLMYYLNNRKK</sequence>
<name>MNMG_META1</name>
<organism>
    <name type="scientific">Metamycoplasma arthritidis (strain 158L3-1)</name>
    <name type="common">Mycoplasma arthritidis</name>
    <dbReference type="NCBI Taxonomy" id="243272"/>
    <lineage>
        <taxon>Bacteria</taxon>
        <taxon>Bacillati</taxon>
        <taxon>Mycoplasmatota</taxon>
        <taxon>Mycoplasmoidales</taxon>
        <taxon>Metamycoplasmataceae</taxon>
        <taxon>Metamycoplasma</taxon>
    </lineage>
</organism>
<protein>
    <recommendedName>
        <fullName evidence="1">tRNA uridine 5-carboxymethylaminomethyl modification enzyme MnmG</fullName>
    </recommendedName>
    <alternativeName>
        <fullName evidence="1">Glucose-inhibited division protein A</fullName>
    </alternativeName>
</protein>
<comment type="function">
    <text evidence="1">NAD-binding protein involved in the addition of a carboxymethylaminomethyl (cmnm) group at the wobble position (U34) of certain tRNAs, forming tRNA-cmnm(5)s(2)U34.</text>
</comment>
<comment type="cofactor">
    <cofactor evidence="1">
        <name>FAD</name>
        <dbReference type="ChEBI" id="CHEBI:57692"/>
    </cofactor>
</comment>
<comment type="subunit">
    <text evidence="1">Homodimer. Heterotetramer of two MnmE and two MnmG subunits.</text>
</comment>
<comment type="subcellular location">
    <subcellularLocation>
        <location evidence="1">Cytoplasm</location>
    </subcellularLocation>
</comment>
<comment type="similarity">
    <text evidence="1">Belongs to the MnmG family.</text>
</comment>
<reference key="1">
    <citation type="journal article" date="2008" name="Infect. Immun.">
        <title>Genome of Mycoplasma arthritidis.</title>
        <authorList>
            <person name="Dybvig K."/>
            <person name="Zuhua C."/>
            <person name="Lao P."/>
            <person name="Jordan D.S."/>
            <person name="French C.T."/>
            <person name="Tu A.H."/>
            <person name="Loraine A.E."/>
        </authorList>
    </citation>
    <scope>NUCLEOTIDE SEQUENCE [LARGE SCALE GENOMIC DNA]</scope>
    <source>
        <strain>158L3-1</strain>
    </source>
</reference>
<proteinExistence type="inferred from homology"/>